<reference key="1">
    <citation type="journal article" date="2004" name="Nat. Biotechnol.">
        <title>The genome sequence of the capnophilic rumen bacterium Mannheimia succiniciproducens.</title>
        <authorList>
            <person name="Hong S.H."/>
            <person name="Kim J.S."/>
            <person name="Lee S.Y."/>
            <person name="In Y.H."/>
            <person name="Choi S.S."/>
            <person name="Rih J.-K."/>
            <person name="Kim C.H."/>
            <person name="Jeong H."/>
            <person name="Hur C.G."/>
            <person name="Kim J.J."/>
        </authorList>
    </citation>
    <scope>NUCLEOTIDE SEQUENCE [LARGE SCALE GENOMIC DNA]</scope>
    <source>
        <strain>KCTC 0769BP / MBEL55E</strain>
    </source>
</reference>
<gene>
    <name evidence="1" type="primary">mltC</name>
    <name type="ordered locus">MS0315</name>
</gene>
<proteinExistence type="inferred from homology"/>
<keyword id="KW-0998">Cell outer membrane</keyword>
<keyword id="KW-0961">Cell wall biogenesis/degradation</keyword>
<keyword id="KW-0449">Lipoprotein</keyword>
<keyword id="KW-0456">Lyase</keyword>
<keyword id="KW-0472">Membrane</keyword>
<keyword id="KW-0564">Palmitate</keyword>
<keyword id="KW-0732">Signal</keyword>
<feature type="signal peptide" evidence="1">
    <location>
        <begin position="1"/>
        <end position="17"/>
    </location>
</feature>
<feature type="chain" id="PRO_0000032791" description="Membrane-bound lytic murein transglycosylase C">
    <location>
        <begin position="18"/>
        <end position="357"/>
    </location>
</feature>
<feature type="lipid moiety-binding region" description="N-palmitoyl cysteine" evidence="1">
    <location>
        <position position="18"/>
    </location>
</feature>
<feature type="lipid moiety-binding region" description="S-diacylglycerol cysteine" evidence="1">
    <location>
        <position position="18"/>
    </location>
</feature>
<accession>Q65VT8</accession>
<evidence type="ECO:0000255" key="1">
    <source>
        <dbReference type="HAMAP-Rule" id="MF_01616"/>
    </source>
</evidence>
<evidence type="ECO:0000305" key="2"/>
<organism>
    <name type="scientific">Mannheimia succiniciproducens (strain KCTC 0769BP / MBEL55E)</name>
    <dbReference type="NCBI Taxonomy" id="221988"/>
    <lineage>
        <taxon>Bacteria</taxon>
        <taxon>Pseudomonadati</taxon>
        <taxon>Pseudomonadota</taxon>
        <taxon>Gammaproteobacteria</taxon>
        <taxon>Pasteurellales</taxon>
        <taxon>Pasteurellaceae</taxon>
        <taxon>Basfia</taxon>
    </lineage>
</organism>
<comment type="function">
    <text evidence="1">Murein-degrading enzyme. May play a role in recycling of muropeptides during cell elongation and/or cell division.</text>
</comment>
<comment type="catalytic activity">
    <reaction evidence="1">
        <text>Exolytic cleavage of the (1-&gt;4)-beta-glycosidic linkage between N-acetylmuramic acid (MurNAc) and N-acetylglucosamine (GlcNAc) residues in peptidoglycan, from either the reducing or the non-reducing ends of the peptidoglycan chains, with concomitant formation of a 1,6-anhydrobond in the MurNAc residue.</text>
        <dbReference type="EC" id="4.2.2.n1"/>
    </reaction>
</comment>
<comment type="subcellular location">
    <subcellularLocation>
        <location evidence="1">Cell outer membrane</location>
        <topology evidence="1">Lipid-anchor</topology>
    </subcellularLocation>
</comment>
<comment type="similarity">
    <text evidence="1">Belongs to the transglycosylase Slt family.</text>
</comment>
<comment type="sequence caution" evidence="2">
    <conflict type="erroneous initiation">
        <sequence resource="EMBL-CDS" id="AAU36922"/>
    </conflict>
</comment>
<protein>
    <recommendedName>
        <fullName evidence="1">Membrane-bound lytic murein transglycosylase C</fullName>
        <ecNumber evidence="1">4.2.2.n1</ecNumber>
    </recommendedName>
    <alternativeName>
        <fullName evidence="1">Murein lyase C</fullName>
    </alternativeName>
</protein>
<sequence>MKLKKFLVLLLIPFLYACSSDRSGNYDDAFAKDTNGLDLLTGQFSQNIDQIWGVNELLVASRKDYVKYTDSYYTRSHISFEEGQITIETLADANRLHSAIVHTLLMGSDAKGIDLFASGDVPISSRPFLVGQVVDNFGRQINNIDVANSFASYLLQNRLQSRRLSNGRTVQFVSIQMIANHVNVRARKYLSLVRQASRRYGIDESLILGIMQTESSFNPYAISYANAMGLMQVVPHTAGRDIFKLKGRSGQPSKSYLFDPANNIDAGVSYLWILKNEYLAGITNPTSMRYAMISAYNSGAGAVLRVFDSDQEYAINIINRMQPEQVYRILTTVHPSSQARNYLLKVDKAQRSYRRAR</sequence>
<name>MLTC_MANSM</name>
<dbReference type="EC" id="4.2.2.n1" evidence="1"/>
<dbReference type="EMBL" id="AE016827">
    <property type="protein sequence ID" value="AAU36922.1"/>
    <property type="status" value="ALT_INIT"/>
    <property type="molecule type" value="Genomic_DNA"/>
</dbReference>
<dbReference type="RefSeq" id="WP_041639491.1">
    <property type="nucleotide sequence ID" value="NC_006300.1"/>
</dbReference>
<dbReference type="SMR" id="Q65VT8"/>
<dbReference type="STRING" id="221988.MS0315"/>
<dbReference type="CAZy" id="GH23">
    <property type="family name" value="Glycoside Hydrolase Family 23"/>
</dbReference>
<dbReference type="KEGG" id="msu:MS0315"/>
<dbReference type="eggNOG" id="COG0741">
    <property type="taxonomic scope" value="Bacteria"/>
</dbReference>
<dbReference type="HOGENOM" id="CLU_044583_0_0_6"/>
<dbReference type="OrthoDB" id="5620293at2"/>
<dbReference type="Proteomes" id="UP000000607">
    <property type="component" value="Chromosome"/>
</dbReference>
<dbReference type="GO" id="GO:0009279">
    <property type="term" value="C:cell outer membrane"/>
    <property type="evidence" value="ECO:0007669"/>
    <property type="project" value="UniProtKB-SubCell"/>
</dbReference>
<dbReference type="GO" id="GO:0016798">
    <property type="term" value="F:hydrolase activity, acting on glycosyl bonds"/>
    <property type="evidence" value="ECO:0007669"/>
    <property type="project" value="InterPro"/>
</dbReference>
<dbReference type="GO" id="GO:0008933">
    <property type="term" value="F:peptidoglycan lytic transglycosylase activity"/>
    <property type="evidence" value="ECO:0007669"/>
    <property type="project" value="UniProtKB-UniRule"/>
</dbReference>
<dbReference type="GO" id="GO:0016998">
    <property type="term" value="P:cell wall macromolecule catabolic process"/>
    <property type="evidence" value="ECO:0007669"/>
    <property type="project" value="UniProtKB-UniRule"/>
</dbReference>
<dbReference type="GO" id="GO:0071555">
    <property type="term" value="P:cell wall organization"/>
    <property type="evidence" value="ECO:0007669"/>
    <property type="project" value="UniProtKB-KW"/>
</dbReference>
<dbReference type="GO" id="GO:0000270">
    <property type="term" value="P:peptidoglycan metabolic process"/>
    <property type="evidence" value="ECO:0007669"/>
    <property type="project" value="InterPro"/>
</dbReference>
<dbReference type="CDD" id="cd16893">
    <property type="entry name" value="LT_MltC_MltE"/>
    <property type="match status" value="1"/>
</dbReference>
<dbReference type="Gene3D" id="1.10.530.10">
    <property type="match status" value="1"/>
</dbReference>
<dbReference type="HAMAP" id="MF_01616">
    <property type="entry name" value="MltC"/>
    <property type="match status" value="1"/>
</dbReference>
<dbReference type="InterPro" id="IPR023346">
    <property type="entry name" value="Lysozyme-like_dom_sf"/>
</dbReference>
<dbReference type="InterPro" id="IPR023664">
    <property type="entry name" value="Murein_transglycosylaseC"/>
</dbReference>
<dbReference type="InterPro" id="IPR024570">
    <property type="entry name" value="Murein_transglycosylaseC_N"/>
</dbReference>
<dbReference type="InterPro" id="IPR000189">
    <property type="entry name" value="Transglyc_AS"/>
</dbReference>
<dbReference type="InterPro" id="IPR008258">
    <property type="entry name" value="Transglycosylase_SLT_dom_1"/>
</dbReference>
<dbReference type="NCBIfam" id="NF008670">
    <property type="entry name" value="PRK11671.1"/>
    <property type="match status" value="1"/>
</dbReference>
<dbReference type="PANTHER" id="PTHR37423:SF2">
    <property type="entry name" value="MEMBRANE-BOUND LYTIC MUREIN TRANSGLYCOSYLASE C"/>
    <property type="match status" value="1"/>
</dbReference>
<dbReference type="PANTHER" id="PTHR37423">
    <property type="entry name" value="SOLUBLE LYTIC MUREIN TRANSGLYCOSYLASE-RELATED"/>
    <property type="match status" value="1"/>
</dbReference>
<dbReference type="Pfam" id="PF11873">
    <property type="entry name" value="Mltc_N"/>
    <property type="match status" value="1"/>
</dbReference>
<dbReference type="Pfam" id="PF01464">
    <property type="entry name" value="SLT"/>
    <property type="match status" value="1"/>
</dbReference>
<dbReference type="SUPFAM" id="SSF53955">
    <property type="entry name" value="Lysozyme-like"/>
    <property type="match status" value="1"/>
</dbReference>
<dbReference type="PROSITE" id="PS51257">
    <property type="entry name" value="PROKAR_LIPOPROTEIN"/>
    <property type="match status" value="1"/>
</dbReference>
<dbReference type="PROSITE" id="PS00922">
    <property type="entry name" value="TRANSGLYCOSYLASE"/>
    <property type="match status" value="1"/>
</dbReference>